<protein>
    <recommendedName>
        <fullName>General transcription and DNA repair factor IIH helicase subunit XPD</fullName>
        <shortName>TFIIH subunit XPD</shortName>
        <ecNumber evidence="1">5.6.2.3</ecNumber>
    </recommendedName>
    <alternativeName>
        <fullName evidence="9">DNA 5'-3' helicase XPD</fullName>
    </alternativeName>
    <alternativeName>
        <fullName>DNA excision repair cross-complementing protein-2 homolog</fullName>
    </alternativeName>
    <alternativeName>
        <fullName>DNA repair protein D</fullName>
    </alternativeName>
    <alternativeName>
        <fullName>TFIIH basal transcription factor complex helicase repD subunit</fullName>
    </alternativeName>
</protein>
<keyword id="KW-0004">4Fe-4S</keyword>
<keyword id="KW-0067">ATP-binding</keyword>
<keyword id="KW-0227">DNA damage</keyword>
<keyword id="KW-0234">DNA repair</keyword>
<keyword id="KW-0238">DNA-binding</keyword>
<keyword id="KW-0347">Helicase</keyword>
<keyword id="KW-0378">Hydrolase</keyword>
<keyword id="KW-0408">Iron</keyword>
<keyword id="KW-0411">Iron-sulfur</keyword>
<keyword id="KW-0413">Isomerase</keyword>
<keyword id="KW-0460">Magnesium</keyword>
<keyword id="KW-0479">Metal-binding</keyword>
<keyword id="KW-0547">Nucleotide-binding</keyword>
<keyword id="KW-0539">Nucleus</keyword>
<keyword id="KW-1185">Reference proteome</keyword>
<keyword id="KW-0804">Transcription</keyword>
<keyword id="KW-0805">Transcription regulation</keyword>
<feature type="chain" id="PRO_0000328565" description="General transcription and DNA repair factor IIH helicase subunit XPD">
    <location>
        <begin position="1"/>
        <end position="776"/>
    </location>
</feature>
<feature type="domain" description="Helicase ATP-binding" evidence="2">
    <location>
        <begin position="7"/>
        <end position="277"/>
    </location>
</feature>
<feature type="region of interest" description="Disordered" evidence="3">
    <location>
        <begin position="736"/>
        <end position="776"/>
    </location>
</feature>
<feature type="short sequence motif" description="DEAH box">
    <location>
        <begin position="228"/>
        <end position="231"/>
    </location>
</feature>
<feature type="compositionally biased region" description="Polar residues" evidence="3">
    <location>
        <begin position="742"/>
        <end position="754"/>
    </location>
</feature>
<feature type="compositionally biased region" description="Low complexity" evidence="3">
    <location>
        <begin position="755"/>
        <end position="776"/>
    </location>
</feature>
<feature type="binding site" evidence="2">
    <location>
        <begin position="42"/>
        <end position="49"/>
    </location>
    <ligand>
        <name>ATP</name>
        <dbReference type="ChEBI" id="CHEBI:30616"/>
    </ligand>
</feature>
<feature type="binding site" evidence="1">
    <location>
        <position position="115"/>
    </location>
    <ligand>
        <name>[4Fe-4S] cluster</name>
        <dbReference type="ChEBI" id="CHEBI:49883"/>
    </ligand>
</feature>
<feature type="binding site" evidence="1">
    <location>
        <position position="133"/>
    </location>
    <ligand>
        <name>[4Fe-4S] cluster</name>
        <dbReference type="ChEBI" id="CHEBI:49883"/>
    </ligand>
</feature>
<feature type="binding site" evidence="1">
    <location>
        <position position="150"/>
    </location>
    <ligand>
        <name>[4Fe-4S] cluster</name>
        <dbReference type="ChEBI" id="CHEBI:49883"/>
    </ligand>
</feature>
<feature type="binding site" evidence="1">
    <location>
        <position position="184"/>
    </location>
    <ligand>
        <name>[4Fe-4S] cluster</name>
        <dbReference type="ChEBI" id="CHEBI:49883"/>
    </ligand>
</feature>
<feature type="sequence conflict" description="In Ref. 1; AAB62733." evidence="9" ref="1">
    <original>AEH</original>
    <variation>PSI</variation>
    <location>
        <begin position="319"/>
        <end position="321"/>
    </location>
</feature>
<accession>Q55G81</accession>
<accession>O00836</accession>
<organism>
    <name type="scientific">Dictyostelium discoideum</name>
    <name type="common">Social amoeba</name>
    <dbReference type="NCBI Taxonomy" id="44689"/>
    <lineage>
        <taxon>Eukaryota</taxon>
        <taxon>Amoebozoa</taxon>
        <taxon>Evosea</taxon>
        <taxon>Eumycetozoa</taxon>
        <taxon>Dictyostelia</taxon>
        <taxon>Dictyosteliales</taxon>
        <taxon>Dictyosteliaceae</taxon>
        <taxon>Dictyostelium</taxon>
    </lineage>
</organism>
<evidence type="ECO:0000250" key="1">
    <source>
        <dbReference type="UniProtKB" id="P18074"/>
    </source>
</evidence>
<evidence type="ECO:0000255" key="2">
    <source>
        <dbReference type="PROSITE-ProRule" id="PRU00541"/>
    </source>
</evidence>
<evidence type="ECO:0000256" key="3">
    <source>
        <dbReference type="SAM" id="MobiDB-lite"/>
    </source>
</evidence>
<evidence type="ECO:0000269" key="4">
    <source>
    </source>
</evidence>
<evidence type="ECO:0000269" key="5">
    <source>
    </source>
</evidence>
<evidence type="ECO:0000269" key="6">
    <source>
    </source>
</evidence>
<evidence type="ECO:0000269" key="7">
    <source>
    </source>
</evidence>
<evidence type="ECO:0000303" key="8">
    <source>
    </source>
</evidence>
<evidence type="ECO:0000305" key="9"/>
<proteinExistence type="evidence at transcript level"/>
<dbReference type="EC" id="5.6.2.3" evidence="1"/>
<dbReference type="EMBL" id="U77066">
    <property type="protein sequence ID" value="AAB62733.1"/>
    <property type="molecule type" value="Genomic_DNA"/>
</dbReference>
<dbReference type="EMBL" id="AAFI02000003">
    <property type="protein sequence ID" value="EAL73159.1"/>
    <property type="molecule type" value="Genomic_DNA"/>
</dbReference>
<dbReference type="RefSeq" id="XP_647302.1">
    <property type="nucleotide sequence ID" value="XM_642210.1"/>
</dbReference>
<dbReference type="SMR" id="Q55G81"/>
<dbReference type="FunCoup" id="Q55G81">
    <property type="interactions" value="854"/>
</dbReference>
<dbReference type="STRING" id="44689.Q55G81"/>
<dbReference type="PaxDb" id="44689-DDB0191272"/>
<dbReference type="EnsemblProtists" id="EAL73159">
    <property type="protein sequence ID" value="EAL73159"/>
    <property type="gene ID" value="DDB_G0267414"/>
</dbReference>
<dbReference type="GeneID" id="8616111"/>
<dbReference type="KEGG" id="ddi:DDB_G0267414"/>
<dbReference type="dictyBase" id="DDB_G0267414">
    <property type="gene designation" value="repD"/>
</dbReference>
<dbReference type="VEuPathDB" id="AmoebaDB:DDB_G0267414"/>
<dbReference type="eggNOG" id="KOG1131">
    <property type="taxonomic scope" value="Eukaryota"/>
</dbReference>
<dbReference type="HOGENOM" id="CLU_011312_1_0_1"/>
<dbReference type="InParanoid" id="Q55G81"/>
<dbReference type="OMA" id="WQTMGIL"/>
<dbReference type="PhylomeDB" id="Q55G81"/>
<dbReference type="Reactome" id="R-DDI-113418">
    <property type="pathway name" value="Formation of the Early Elongation Complex"/>
</dbReference>
<dbReference type="Reactome" id="R-DDI-5696395">
    <property type="pathway name" value="Formation of Incision Complex in GG-NER"/>
</dbReference>
<dbReference type="Reactome" id="R-DDI-674695">
    <property type="pathway name" value="RNA Polymerase II Pre-transcription Events"/>
</dbReference>
<dbReference type="Reactome" id="R-DDI-6781823">
    <property type="pathway name" value="Formation of TC-NER Pre-Incision Complex"/>
</dbReference>
<dbReference type="Reactome" id="R-DDI-6782135">
    <property type="pathway name" value="Dual incision in TC-NER"/>
</dbReference>
<dbReference type="Reactome" id="R-DDI-6782210">
    <property type="pathway name" value="Gap-filling DNA repair synthesis and ligation in TC-NER"/>
</dbReference>
<dbReference type="Reactome" id="R-DDI-6796648">
    <property type="pathway name" value="TP53 Regulates Transcription of DNA Repair Genes"/>
</dbReference>
<dbReference type="Reactome" id="R-DDI-72086">
    <property type="pathway name" value="mRNA Capping"/>
</dbReference>
<dbReference type="Reactome" id="R-DDI-73772">
    <property type="pathway name" value="RNA Polymerase I Promoter Escape"/>
</dbReference>
<dbReference type="Reactome" id="R-DDI-73776">
    <property type="pathway name" value="RNA Polymerase II Promoter Escape"/>
</dbReference>
<dbReference type="Reactome" id="R-DDI-73779">
    <property type="pathway name" value="RNA Polymerase II Transcription Pre-Initiation And Promoter Opening"/>
</dbReference>
<dbReference type="Reactome" id="R-DDI-75953">
    <property type="pathway name" value="RNA Polymerase II Transcription Initiation"/>
</dbReference>
<dbReference type="Reactome" id="R-DDI-76042">
    <property type="pathway name" value="RNA Polymerase II Transcription Initiation And Promoter Clearance"/>
</dbReference>
<dbReference type="Reactome" id="R-DDI-77075">
    <property type="pathway name" value="RNA Pol II CTD phosphorylation and interaction with CE"/>
</dbReference>
<dbReference type="PRO" id="PR:Q55G81"/>
<dbReference type="Proteomes" id="UP000002195">
    <property type="component" value="Chromosome 1"/>
</dbReference>
<dbReference type="GO" id="GO:0005634">
    <property type="term" value="C:nucleus"/>
    <property type="evidence" value="ECO:0000318"/>
    <property type="project" value="GO_Central"/>
</dbReference>
<dbReference type="GO" id="GO:0005675">
    <property type="term" value="C:transcription factor TFIIH holo complex"/>
    <property type="evidence" value="ECO:0000250"/>
    <property type="project" value="dictyBase"/>
</dbReference>
<dbReference type="GO" id="GO:0051539">
    <property type="term" value="F:4 iron, 4 sulfur cluster binding"/>
    <property type="evidence" value="ECO:0007669"/>
    <property type="project" value="UniProtKB-KW"/>
</dbReference>
<dbReference type="GO" id="GO:0043139">
    <property type="term" value="F:5'-3' DNA helicase activity"/>
    <property type="evidence" value="ECO:0000250"/>
    <property type="project" value="dictyBase"/>
</dbReference>
<dbReference type="GO" id="GO:0005524">
    <property type="term" value="F:ATP binding"/>
    <property type="evidence" value="ECO:0007669"/>
    <property type="project" value="UniProtKB-KW"/>
</dbReference>
<dbReference type="GO" id="GO:0016887">
    <property type="term" value="F:ATP hydrolysis activity"/>
    <property type="evidence" value="ECO:0007669"/>
    <property type="project" value="RHEA"/>
</dbReference>
<dbReference type="GO" id="GO:0003684">
    <property type="term" value="F:damaged DNA binding"/>
    <property type="evidence" value="ECO:0000318"/>
    <property type="project" value="GO_Central"/>
</dbReference>
<dbReference type="GO" id="GO:0003678">
    <property type="term" value="F:DNA helicase activity"/>
    <property type="evidence" value="ECO:0000318"/>
    <property type="project" value="GO_Central"/>
</dbReference>
<dbReference type="GO" id="GO:0046872">
    <property type="term" value="F:metal ion binding"/>
    <property type="evidence" value="ECO:0007669"/>
    <property type="project" value="UniProtKB-KW"/>
</dbReference>
<dbReference type="GO" id="GO:0006974">
    <property type="term" value="P:DNA damage response"/>
    <property type="evidence" value="ECO:0000270"/>
    <property type="project" value="dictyBase"/>
</dbReference>
<dbReference type="GO" id="GO:0006289">
    <property type="term" value="P:nucleotide-excision repair"/>
    <property type="evidence" value="ECO:0000250"/>
    <property type="project" value="dictyBase"/>
</dbReference>
<dbReference type="GO" id="GO:0045951">
    <property type="term" value="P:positive regulation of mitotic recombination"/>
    <property type="evidence" value="ECO:0000318"/>
    <property type="project" value="GO_Central"/>
</dbReference>
<dbReference type="GO" id="GO:0006366">
    <property type="term" value="P:transcription by RNA polymerase II"/>
    <property type="evidence" value="ECO:0000250"/>
    <property type="project" value="dictyBase"/>
</dbReference>
<dbReference type="CDD" id="cd18788">
    <property type="entry name" value="SF2_C_XPD"/>
    <property type="match status" value="1"/>
</dbReference>
<dbReference type="FunFam" id="3.40.50.300:FF:000135">
    <property type="entry name" value="DNA repair helicase RAD3, putative"/>
    <property type="match status" value="1"/>
</dbReference>
<dbReference type="FunFam" id="3.40.50.300:FF:000128">
    <property type="entry name" value="Putative DNA repair helicase RAD3"/>
    <property type="match status" value="1"/>
</dbReference>
<dbReference type="Gene3D" id="1.10.275.30">
    <property type="match status" value="1"/>
</dbReference>
<dbReference type="Gene3D" id="3.40.50.300">
    <property type="entry name" value="P-loop containing nucleotide triphosphate hydrolases"/>
    <property type="match status" value="3"/>
</dbReference>
<dbReference type="InterPro" id="IPR006555">
    <property type="entry name" value="ATP-dep_Helicase_C"/>
</dbReference>
<dbReference type="InterPro" id="IPR045028">
    <property type="entry name" value="DinG/Rad3-like"/>
</dbReference>
<dbReference type="InterPro" id="IPR002464">
    <property type="entry name" value="DNA/RNA_helicase_DEAH_CS"/>
</dbReference>
<dbReference type="InterPro" id="IPR010643">
    <property type="entry name" value="HBB"/>
</dbReference>
<dbReference type="InterPro" id="IPR014013">
    <property type="entry name" value="Helic_SF1/SF2_ATP-bd_DinG/Rad3"/>
</dbReference>
<dbReference type="InterPro" id="IPR006554">
    <property type="entry name" value="Helicase-like_DEXD_c2"/>
</dbReference>
<dbReference type="InterPro" id="IPR027417">
    <property type="entry name" value="P-loop_NTPase"/>
</dbReference>
<dbReference type="InterPro" id="IPR010614">
    <property type="entry name" value="RAD3-like_helicase_DEAD"/>
</dbReference>
<dbReference type="InterPro" id="IPR013020">
    <property type="entry name" value="Rad3/Chl1-like"/>
</dbReference>
<dbReference type="InterPro" id="IPR001945">
    <property type="entry name" value="RAD3/XPD"/>
</dbReference>
<dbReference type="NCBIfam" id="TIGR00604">
    <property type="entry name" value="rad3"/>
    <property type="match status" value="1"/>
</dbReference>
<dbReference type="PANTHER" id="PTHR11472">
    <property type="entry name" value="DNA REPAIR DEAD HELICASE RAD3/XP-D SUBFAMILY MEMBER"/>
    <property type="match status" value="1"/>
</dbReference>
<dbReference type="PANTHER" id="PTHR11472:SF1">
    <property type="entry name" value="GENERAL TRANSCRIPTION AND DNA REPAIR FACTOR IIH HELICASE SUBUNIT XPD"/>
    <property type="match status" value="1"/>
</dbReference>
<dbReference type="Pfam" id="PF06733">
    <property type="entry name" value="DEAD_2"/>
    <property type="match status" value="1"/>
</dbReference>
<dbReference type="Pfam" id="PF06777">
    <property type="entry name" value="HBB"/>
    <property type="match status" value="1"/>
</dbReference>
<dbReference type="Pfam" id="PF13307">
    <property type="entry name" value="Helicase_C_2"/>
    <property type="match status" value="1"/>
</dbReference>
<dbReference type="PRINTS" id="PR00852">
    <property type="entry name" value="XRODRMPGMNTD"/>
</dbReference>
<dbReference type="SMART" id="SM00488">
    <property type="entry name" value="DEXDc2"/>
    <property type="match status" value="1"/>
</dbReference>
<dbReference type="SMART" id="SM00491">
    <property type="entry name" value="HELICc2"/>
    <property type="match status" value="1"/>
</dbReference>
<dbReference type="SUPFAM" id="SSF52540">
    <property type="entry name" value="P-loop containing nucleoside triphosphate hydrolases"/>
    <property type="match status" value="1"/>
</dbReference>
<dbReference type="PROSITE" id="PS00690">
    <property type="entry name" value="DEAH_ATP_HELICASE"/>
    <property type="match status" value="1"/>
</dbReference>
<dbReference type="PROSITE" id="PS51193">
    <property type="entry name" value="HELICASE_ATP_BIND_2"/>
    <property type="match status" value="1"/>
</dbReference>
<comment type="function">
    <text evidence="1">ATP-dependent 5'-3' DNA helicase, component of the general transcription and DNA repair factor IIH (TFIIH) core complex, which is involved in general and transcription-coupled nucleotide excision repair (NER) of damaged DNA and, when complexed to CDK-activating kinase (CAK), in transcription by RNA polymerase II. In NER, TFIIH acts by opening DNA around the lesion to allow the excision of the damaged oligonucleotide and its replacement by a new DNA fragment. The ATP-dependent helicase activity of XPD/repD is required for DNA opening. In transcription, TFIIH has an essential role in transcription initiation. When the pre-initiation complex (PIC) has been established, TFIIH is required for promoter opening and promoter escape. Phosphorylation of the C-terminal tail (CTD) of the largest subunit of RNA polymerase II by the kinase module CAK controls the initiation of transcription. XPD/repD acts by forming a bridge between CAK and the core-TFIIH complex.</text>
</comment>
<comment type="catalytic activity">
    <reaction evidence="1">
        <text>Couples ATP hydrolysis with the unwinding of duplex DNA at the replication fork by translocating in the 5'-3' direction. This creates two antiparallel DNA single strands (ssDNA). The leading ssDNA polymer is the template for DNA polymerase III holoenzyme which synthesizes a continuous strand.</text>
        <dbReference type="EC" id="5.6.2.3"/>
    </reaction>
</comment>
<comment type="catalytic activity">
    <reaction evidence="1">
        <text>ATP + H2O = ADP + phosphate + H(+)</text>
        <dbReference type="Rhea" id="RHEA:13065"/>
        <dbReference type="ChEBI" id="CHEBI:15377"/>
        <dbReference type="ChEBI" id="CHEBI:15378"/>
        <dbReference type="ChEBI" id="CHEBI:30616"/>
        <dbReference type="ChEBI" id="CHEBI:43474"/>
        <dbReference type="ChEBI" id="CHEBI:456216"/>
        <dbReference type="EC" id="5.6.2.3"/>
    </reaction>
</comment>
<comment type="cofactor">
    <cofactor evidence="1">
        <name>Mg(2+)</name>
        <dbReference type="ChEBI" id="CHEBI:18420"/>
    </cofactor>
</comment>
<comment type="cofactor">
    <cofactor evidence="1">
        <name>[4Fe-4S] cluster</name>
        <dbReference type="ChEBI" id="CHEBI:49883"/>
    </cofactor>
    <text evidence="1">Binds 1 [4Fe-4S] cluster.</text>
</comment>
<comment type="subunit">
    <text evidence="1">Component of the 7-subunit TFIIH core complex composed of XPB/repB, XPD/repD, gtf2h1, gtf2h2, gtf2h3, gtf2h4 and gtf2h5, which is active in NER. The core complex associates with the 3-subunit CDK-activating kinase (CAK) module composed of cycH/cyclin H, cdk7 and mnat1 to form the 10-subunit holoenzyme (holo-TFIIH) active in transcription.</text>
</comment>
<comment type="subcellular location">
    <subcellularLocation>
        <location evidence="1">Nucleus</location>
    </subcellularLocation>
</comment>
<comment type="developmental stage">
    <text evidence="4 5">Levels accumulate after the removal of the food source and increase with the onset of development (expression peaks at 3-4 hours of development and decreases to a low baseline level by 7 hours). Expression remain elevated during chemotaxis and formation of multicellular assemblies, and then return to baseline levels for the rest of the development.</text>
</comment>
<comment type="induction">
    <text evidence="4 6 7">Up-regulated in response to DNA damage due to UV light or exposure to cisplatin. Unaffected by exposure to hydrogen peroxide.</text>
</comment>
<comment type="similarity">
    <text evidence="9">Belongs to the helicase family. RAD3/XPD subfamily.</text>
</comment>
<name>ERCC2_DICDI</name>
<sequence length="776" mass="88278">MKFYIEDLLVYFPYSYIYPEQYSYMVALKRSLDNGGPCILEMPSGTGKTVSLLSLISSYQVKNPSIKLIYCSRTVPEIEQATEEARRVLQYRNSEMGEESPKTLCMSMSSRRNLCIQPRVSEERDGKVVDALCRELTSSWNRESPTSEKCKFFENFESNGKEILLEGVYSLEDLKEYGLKHQMCPYFLSRHMLNFANIVIFSYQYLLDPKIASLISSSFPSNSIVVFDEAHNIDNVCINALSINIDNKLLDTSSKNIAKINKQIEDIKKVDEKRLKDEYQRLVNGLARSGSTRADETTSDPVLPNDVIQEAVPGNIRKAEHFISLLRRVVDYLKSRLKSQMLLSESPLAFLQGLYHATQISSRTLRFCSSRLSSLLRTLRINDVNQFSGISLIADFATLVGTYNNGFLIIIEPYYQRQNNTYDQIFQFCCLDASIGMKPIFDKYRSVVITSGTLSPLDIYTKMLNFRPTVVERLTMSLNRNCICPCILTRGSDQISISTKFDVRSDTAVVRNYGALLVEVSAIVPDGIICFFTSYSYMEQIVSVWNEMGLLNNILTNKLIFVETSDPAESALALQNYKKACDSGRGAVLLSVARGKVSEGIDFDNQYGRCVILYGIPYINTESKVLRARLEFLRDRYQIRENEFLTFDAMRTASQCVGRVIRGKSDYGIMIFADKRYNRLDKRNKLPQWILQFCQPQHLNLSTDMAISLSKTFLREMGQPFSREEQLGKSLWSLEHVEKQSTSKPPQQQNSAINSTITTSTTTTTTTSTISETHLT</sequence>
<reference key="1">
    <citation type="journal article" date="1997" name="Nucleic Acids Res.">
        <title>Differential developmental expression of the rep B and rep D xeroderma pigmentosum related DNA helicase genes from Dictyostelium discoideum.</title>
        <authorList>
            <person name="Lee S.-K."/>
            <person name="Yu S.-L."/>
            <person name="Garcia M.X.U."/>
            <person name="Alexander H."/>
            <person name="Alexander S."/>
        </authorList>
    </citation>
    <scope>NUCLEOTIDE SEQUENCE [GENOMIC DNA]</scope>
    <scope>DEVELOPMENTAL STAGE</scope>
    <source>
        <strain>AX4</strain>
    </source>
</reference>
<reference key="2">
    <citation type="journal article" date="2005" name="Nature">
        <title>The genome of the social amoeba Dictyostelium discoideum.</title>
        <authorList>
            <person name="Eichinger L."/>
            <person name="Pachebat J.A."/>
            <person name="Gloeckner G."/>
            <person name="Rajandream M.A."/>
            <person name="Sucgang R."/>
            <person name="Berriman M."/>
            <person name="Song J."/>
            <person name="Olsen R."/>
            <person name="Szafranski K."/>
            <person name="Xu Q."/>
            <person name="Tunggal B."/>
            <person name="Kummerfeld S."/>
            <person name="Madera M."/>
            <person name="Konfortov B.A."/>
            <person name="Rivero F."/>
            <person name="Bankier A.T."/>
            <person name="Lehmann R."/>
            <person name="Hamlin N."/>
            <person name="Davies R."/>
            <person name="Gaudet P."/>
            <person name="Fey P."/>
            <person name="Pilcher K."/>
            <person name="Chen G."/>
            <person name="Saunders D."/>
            <person name="Sodergren E.J."/>
            <person name="Davis P."/>
            <person name="Kerhornou A."/>
            <person name="Nie X."/>
            <person name="Hall N."/>
            <person name="Anjard C."/>
            <person name="Hemphill L."/>
            <person name="Bason N."/>
            <person name="Farbrother P."/>
            <person name="Desany B."/>
            <person name="Just E."/>
            <person name="Morio T."/>
            <person name="Rost R."/>
            <person name="Churcher C.M."/>
            <person name="Cooper J."/>
            <person name="Haydock S."/>
            <person name="van Driessche N."/>
            <person name="Cronin A."/>
            <person name="Goodhead I."/>
            <person name="Muzny D.M."/>
            <person name="Mourier T."/>
            <person name="Pain A."/>
            <person name="Lu M."/>
            <person name="Harper D."/>
            <person name="Lindsay R."/>
            <person name="Hauser H."/>
            <person name="James K.D."/>
            <person name="Quiles M."/>
            <person name="Madan Babu M."/>
            <person name="Saito T."/>
            <person name="Buchrieser C."/>
            <person name="Wardroper A."/>
            <person name="Felder M."/>
            <person name="Thangavelu M."/>
            <person name="Johnson D."/>
            <person name="Knights A."/>
            <person name="Loulseged H."/>
            <person name="Mungall K.L."/>
            <person name="Oliver K."/>
            <person name="Price C."/>
            <person name="Quail M.A."/>
            <person name="Urushihara H."/>
            <person name="Hernandez J."/>
            <person name="Rabbinowitsch E."/>
            <person name="Steffen D."/>
            <person name="Sanders M."/>
            <person name="Ma J."/>
            <person name="Kohara Y."/>
            <person name="Sharp S."/>
            <person name="Simmonds M.N."/>
            <person name="Spiegler S."/>
            <person name="Tivey A."/>
            <person name="Sugano S."/>
            <person name="White B."/>
            <person name="Walker D."/>
            <person name="Woodward J.R."/>
            <person name="Winckler T."/>
            <person name="Tanaka Y."/>
            <person name="Shaulsky G."/>
            <person name="Schleicher M."/>
            <person name="Weinstock G.M."/>
            <person name="Rosenthal A."/>
            <person name="Cox E.C."/>
            <person name="Chisholm R.L."/>
            <person name="Gibbs R.A."/>
            <person name="Loomis W.F."/>
            <person name="Platzer M."/>
            <person name="Kay R.R."/>
            <person name="Williams J.G."/>
            <person name="Dear P.H."/>
            <person name="Noegel A.A."/>
            <person name="Barrell B.G."/>
            <person name="Kuspa A."/>
        </authorList>
    </citation>
    <scope>NUCLEOTIDE SEQUENCE [LARGE SCALE GENOMIC DNA]</scope>
    <source>
        <strain>AX4</strain>
    </source>
</reference>
<reference key="3">
    <citation type="journal article" date="1998" name="Biochim. Biophys. Acta">
        <title>A mutation in repB, the dictyostelium homolog of the human xeroderma pigmentosum B gene, has increased sensitivity to UV-light but normal morphogenesis.</title>
        <authorList>
            <person name="Lee S.-K."/>
            <person name="Yu S.-L."/>
            <person name="Alexander H."/>
            <person name="Alexander S."/>
        </authorList>
    </citation>
    <scope>INDUCTION BY UV</scope>
</reference>
<reference key="4">
    <citation type="journal article" date="1998" name="Nucleic Acids Res.">
        <title>Rapid changes of nucleotide excision repair gene expression following UV-irradiation and cisplatin treatment of Dictyostelium discoideum.</title>
        <authorList>
            <person name="Yu S.-L."/>
            <person name="Lee S.-K."/>
            <person name="Alexander H."/>
            <person name="Alexander S."/>
        </authorList>
    </citation>
    <scope>INDUCTION</scope>
</reference>
<reference key="5">
    <citation type="journal article" date="2000" name="Biochim. Biophys. Acta">
        <title>Differential developmental expression and cell type specificity of Dictyostelium catalases and their response to oxidative stress and UV-light.</title>
        <authorList>
            <person name="Garcia M.X.U."/>
            <person name="Foote C."/>
            <person name="van Es S."/>
            <person name="Devreotes P.N."/>
            <person name="Alexander S."/>
            <person name="Alexander H."/>
        </authorList>
    </citation>
    <scope>INDUCTION</scope>
    <scope>DEVELOPMENTAL STAGE</scope>
</reference>
<gene>
    <name evidence="8" type="primary">repD</name>
    <name type="synonym">ercc2</name>
    <name type="ORF">DDB_G0267414</name>
</gene>